<dbReference type="EMBL" id="CP001283">
    <property type="protein sequence ID" value="ACK90653.1"/>
    <property type="molecule type" value="Genomic_DNA"/>
</dbReference>
<dbReference type="RefSeq" id="WP_001123317.1">
    <property type="nucleotide sequence ID" value="NC_011773.1"/>
</dbReference>
<dbReference type="SMR" id="B7JIB5"/>
<dbReference type="KEGG" id="bcu:BCAH820_3697"/>
<dbReference type="HOGENOM" id="CLU_180108_0_1_9"/>
<dbReference type="Proteomes" id="UP000001363">
    <property type="component" value="Chromosome"/>
</dbReference>
<dbReference type="GO" id="GO:0005886">
    <property type="term" value="C:plasma membrane"/>
    <property type="evidence" value="ECO:0007669"/>
    <property type="project" value="UniProtKB-SubCell"/>
</dbReference>
<dbReference type="HAMAP" id="MF_00363">
    <property type="entry name" value="UPF0154"/>
    <property type="match status" value="1"/>
</dbReference>
<dbReference type="InterPro" id="IPR005359">
    <property type="entry name" value="UPF0154"/>
</dbReference>
<dbReference type="NCBIfam" id="NF002503">
    <property type="entry name" value="PRK01844.1"/>
    <property type="match status" value="1"/>
</dbReference>
<dbReference type="Pfam" id="PF03672">
    <property type="entry name" value="UPF0154"/>
    <property type="match status" value="1"/>
</dbReference>
<proteinExistence type="inferred from homology"/>
<accession>B7JIB5</accession>
<protein>
    <recommendedName>
        <fullName evidence="1">UPF0154 protein BCAH820_3697</fullName>
    </recommendedName>
</protein>
<comment type="subcellular location">
    <subcellularLocation>
        <location evidence="1">Cell membrane</location>
        <topology evidence="1">Single-pass membrane protein</topology>
    </subcellularLocation>
</comment>
<comment type="similarity">
    <text evidence="1">Belongs to the UPF0154 family.</text>
</comment>
<feature type="chain" id="PRO_1000121040" description="UPF0154 protein BCAH820_3697">
    <location>
        <begin position="1"/>
        <end position="73"/>
    </location>
</feature>
<feature type="transmembrane region" description="Helical" evidence="1">
    <location>
        <begin position="3"/>
        <end position="23"/>
    </location>
</feature>
<reference key="1">
    <citation type="submission" date="2008-10" db="EMBL/GenBank/DDBJ databases">
        <title>Genome sequence of Bacillus cereus AH820.</title>
        <authorList>
            <person name="Dodson R.J."/>
            <person name="Durkin A.S."/>
            <person name="Rosovitz M.J."/>
            <person name="Rasko D.A."/>
            <person name="Hoffmaster A."/>
            <person name="Ravel J."/>
            <person name="Sutton G."/>
        </authorList>
    </citation>
    <scope>NUCLEOTIDE SEQUENCE [LARGE SCALE GENOMIC DNA]</scope>
    <source>
        <strain>AH820</strain>
    </source>
</reference>
<keyword id="KW-1003">Cell membrane</keyword>
<keyword id="KW-0472">Membrane</keyword>
<keyword id="KW-0812">Transmembrane</keyword>
<keyword id="KW-1133">Transmembrane helix</keyword>
<organism>
    <name type="scientific">Bacillus cereus (strain AH820)</name>
    <dbReference type="NCBI Taxonomy" id="405535"/>
    <lineage>
        <taxon>Bacteria</taxon>
        <taxon>Bacillati</taxon>
        <taxon>Bacillota</taxon>
        <taxon>Bacilli</taxon>
        <taxon>Bacillales</taxon>
        <taxon>Bacillaceae</taxon>
        <taxon>Bacillus</taxon>
        <taxon>Bacillus cereus group</taxon>
    </lineage>
</organism>
<gene>
    <name type="ordered locus">BCAH820_3697</name>
</gene>
<evidence type="ECO:0000255" key="1">
    <source>
        <dbReference type="HAMAP-Rule" id="MF_00363"/>
    </source>
</evidence>
<sequence>MPIWLGILVGVVALVAGVALGFFIARKYMMNYLQKNPPINEQMLKMMMMQMGQKPSQKKINQMMSAMNKQQMK</sequence>
<name>Y3697_BACC0</name>